<organism>
    <name type="scientific">Agkistrodon bilineatus</name>
    <name type="common">Cantil</name>
    <name type="synonym">Tropical moccasin</name>
    <dbReference type="NCBI Taxonomy" id="8718"/>
    <lineage>
        <taxon>Eukaryota</taxon>
        <taxon>Metazoa</taxon>
        <taxon>Chordata</taxon>
        <taxon>Craniata</taxon>
        <taxon>Vertebrata</taxon>
        <taxon>Euteleostomi</taxon>
        <taxon>Lepidosauria</taxon>
        <taxon>Squamata</taxon>
        <taxon>Bifurcata</taxon>
        <taxon>Unidentata</taxon>
        <taxon>Episquamata</taxon>
        <taxon>Toxicofera</taxon>
        <taxon>Serpentes</taxon>
        <taxon>Colubroidea</taxon>
        <taxon>Viperidae</taxon>
        <taxon>Crotalinae</taxon>
        <taxon>Agkistrodon</taxon>
    </lineage>
</organism>
<protein>
    <recommendedName>
        <fullName>Thrombin-like enzyme bilineobin</fullName>
        <shortName>SVTLE</shortName>
        <ecNumber>3.4.21.-</ecNumber>
    </recommendedName>
    <alternativeName>
        <fullName>Fibrinogen-clotting enzyme</fullName>
    </alternativeName>
    <alternativeName>
        <fullName>Snake venom serine protease</fullName>
        <shortName>SVSP</shortName>
    </alternativeName>
</protein>
<name>VSP2_AGKBI</name>
<keyword id="KW-1204">Blood coagulation cascade activating toxin</keyword>
<keyword id="KW-0903">Direct protein sequencing</keyword>
<keyword id="KW-1015">Disulfide bond</keyword>
<keyword id="KW-0325">Glycoprotein</keyword>
<keyword id="KW-1199">Hemostasis impairing toxin</keyword>
<keyword id="KW-0378">Hydrolase</keyword>
<keyword id="KW-0645">Protease</keyword>
<keyword id="KW-0964">Secreted</keyword>
<keyword id="KW-0720">Serine protease</keyword>
<keyword id="KW-0800">Toxin</keyword>
<accession>Q9PSN3</accession>
<accession>Q9PS18</accession>
<evidence type="ECO:0000250" key="1"/>
<evidence type="ECO:0000255" key="2">
    <source>
        <dbReference type="PROSITE-ProRule" id="PRU00274"/>
    </source>
</evidence>
<evidence type="ECO:0000255" key="3">
    <source>
        <dbReference type="PROSITE-ProRule" id="PRU00498"/>
    </source>
</evidence>
<evidence type="ECO:0000269" key="4">
    <source>
    </source>
</evidence>
<evidence type="ECO:0000269" key="5">
    <source>
    </source>
</evidence>
<evidence type="ECO:0000305" key="6"/>
<evidence type="ECO:0000305" key="7">
    <source>
    </source>
</evidence>
<evidence type="ECO:0000305" key="8">
    <source>
    </source>
</evidence>
<proteinExistence type="evidence at protein level"/>
<feature type="chain" id="PRO_0000088725" description="Thrombin-like enzyme bilineobin">
    <location>
        <begin position="1"/>
        <end position="235"/>
    </location>
</feature>
<feature type="domain" description="Peptidase S1" evidence="2">
    <location>
        <begin position="1"/>
        <end position="227"/>
    </location>
</feature>
<feature type="active site" description="Charge relay system" evidence="2">
    <location>
        <position position="43"/>
    </location>
</feature>
<feature type="active site" description="Charge relay system" evidence="2">
    <location>
        <position position="88"/>
    </location>
</feature>
<feature type="active site" description="Charge relay system" evidence="2">
    <location>
        <position position="182"/>
    </location>
</feature>
<feature type="glycosylation site" description="N-linked (GlcNAc...) asparagine" evidence="3">
    <location>
        <position position="45"/>
    </location>
</feature>
<feature type="glycosylation site" description="N-linked (GlcNAc...) asparagine" evidence="3">
    <location>
        <position position="57"/>
    </location>
</feature>
<feature type="glycosylation site" description="N-linked (GlcNAc...) asparagine" evidence="3">
    <location>
        <position position="81"/>
    </location>
</feature>
<feature type="glycosylation site" description="N-linked (GlcNAc...) asparagine" evidence="3">
    <location>
        <position position="132"/>
    </location>
</feature>
<feature type="glycosylation site" description="N-linked (GlcNAc...) asparagine" evidence="3">
    <location>
        <position position="148"/>
    </location>
</feature>
<feature type="glycosylation site" description="N-linked (GlcNAc...) asparagine" evidence="3">
    <location>
        <position position="229"/>
    </location>
</feature>
<feature type="disulfide bond" evidence="4">
    <location>
        <begin position="7"/>
        <end position="141"/>
    </location>
</feature>
<feature type="disulfide bond" evidence="2 4">
    <location>
        <begin position="28"/>
        <end position="44"/>
    </location>
</feature>
<feature type="disulfide bond" evidence="4">
    <location>
        <begin position="78"/>
        <end position="234"/>
    </location>
</feature>
<feature type="disulfide bond" evidence="2 4">
    <location>
        <begin position="120"/>
        <end position="188"/>
    </location>
</feature>
<feature type="disulfide bond" evidence="2 4">
    <location>
        <begin position="152"/>
        <end position="167"/>
    </location>
</feature>
<feature type="disulfide bond" evidence="2 4">
    <location>
        <begin position="178"/>
        <end position="203"/>
    </location>
</feature>
<feature type="sequence conflict" description="In Ref. 2; AA sequence." evidence="6" ref="2">
    <original>I</original>
    <variation>V</variation>
    <location>
        <position position="1"/>
    </location>
</feature>
<reference key="1">
    <citation type="journal article" date="1995" name="Arch. Biochem. Biophys.">
        <title>Primary structure of a coagulant enzyme, bilineobin, from Agkistrodon bilineatus venom.</title>
        <authorList>
            <person name="Nikai T."/>
            <person name="Ohara A."/>
            <person name="Komori Y."/>
            <person name="Fox J.W."/>
            <person name="Sugihara H."/>
        </authorList>
    </citation>
    <scope>PROTEIN SEQUENCE</scope>
    <scope>SUBCELLULAR LOCATION</scope>
    <scope>DISULFIDE BONDS</scope>
    <scope>GLYCOSYLATION</scope>
    <source>
        <tissue>Venom</tissue>
    </source>
</reference>
<reference key="2">
    <citation type="journal article" date="1993" name="Toxicon">
        <title>Effect of bilineobin, a thrombin-like proteinase from the venom of common cantil (Agkistrodon bilineatus).</title>
        <authorList>
            <person name="Komori Y."/>
            <person name="Nikai T."/>
            <person name="Ohara A."/>
            <person name="Yagihashi S."/>
            <person name="Sugihara H."/>
        </authorList>
    </citation>
    <scope>PROTEIN SEQUENCE OF 1-24</scope>
    <scope>FUNCTION</scope>
    <scope>ACTIVITY REGULATION</scope>
    <scope>SUBCELLULAR LOCATION</scope>
    <source>
        <tissue>Venom</tissue>
    </source>
</reference>
<sequence>IIGGDECNINEHRFLVALYDVWSGSFLCGGTLINQEWVLTAAHCNMSNIYIYLGMHNQSVQFDDEERRYPKEKYLFRCSKNFTKWDKDIMLIRLNKPVRNSEHIAPLSLPSSPPIVGSVCRVMGWGTITSPNETLPDVPRCVNINLFNYTVCRGVFPRLPERSRILCAGVLEGGIDTCKRDSGGPLICNGQFQGIVSWGPKRCAQPRKPALYSKVFDHLDWIQSIIAGNKTVNCP</sequence>
<dbReference type="EC" id="3.4.21.-"/>
<dbReference type="PIR" id="S65621">
    <property type="entry name" value="S65621"/>
</dbReference>
<dbReference type="SMR" id="Q9PSN3"/>
<dbReference type="MEROPS" id="S01.181"/>
<dbReference type="GO" id="GO:0005576">
    <property type="term" value="C:extracellular region"/>
    <property type="evidence" value="ECO:0007669"/>
    <property type="project" value="UniProtKB-SubCell"/>
</dbReference>
<dbReference type="GO" id="GO:0030141">
    <property type="term" value="C:secretory granule"/>
    <property type="evidence" value="ECO:0007669"/>
    <property type="project" value="TreeGrafter"/>
</dbReference>
<dbReference type="GO" id="GO:0004252">
    <property type="term" value="F:serine-type endopeptidase activity"/>
    <property type="evidence" value="ECO:0007669"/>
    <property type="project" value="InterPro"/>
</dbReference>
<dbReference type="GO" id="GO:0090729">
    <property type="term" value="F:toxin activity"/>
    <property type="evidence" value="ECO:0007669"/>
    <property type="project" value="UniProtKB-KW"/>
</dbReference>
<dbReference type="GO" id="GO:0006508">
    <property type="term" value="P:proteolysis"/>
    <property type="evidence" value="ECO:0007669"/>
    <property type="project" value="UniProtKB-KW"/>
</dbReference>
<dbReference type="CDD" id="cd00190">
    <property type="entry name" value="Tryp_SPc"/>
    <property type="match status" value="1"/>
</dbReference>
<dbReference type="FunFam" id="2.40.10.10:FF:000158">
    <property type="entry name" value="Thrombin-like enzyme saxthrombin"/>
    <property type="match status" value="1"/>
</dbReference>
<dbReference type="Gene3D" id="2.40.10.10">
    <property type="entry name" value="Trypsin-like serine proteases"/>
    <property type="match status" value="2"/>
</dbReference>
<dbReference type="InterPro" id="IPR009003">
    <property type="entry name" value="Peptidase_S1_PA"/>
</dbReference>
<dbReference type="InterPro" id="IPR043504">
    <property type="entry name" value="Peptidase_S1_PA_chymotrypsin"/>
</dbReference>
<dbReference type="InterPro" id="IPR001314">
    <property type="entry name" value="Peptidase_S1A"/>
</dbReference>
<dbReference type="InterPro" id="IPR001254">
    <property type="entry name" value="Trypsin_dom"/>
</dbReference>
<dbReference type="InterPro" id="IPR018114">
    <property type="entry name" value="TRYPSIN_HIS"/>
</dbReference>
<dbReference type="PANTHER" id="PTHR24271:SF47">
    <property type="entry name" value="KALLIKREIN-1"/>
    <property type="match status" value="1"/>
</dbReference>
<dbReference type="PANTHER" id="PTHR24271">
    <property type="entry name" value="KALLIKREIN-RELATED"/>
    <property type="match status" value="1"/>
</dbReference>
<dbReference type="Pfam" id="PF00089">
    <property type="entry name" value="Trypsin"/>
    <property type="match status" value="1"/>
</dbReference>
<dbReference type="PRINTS" id="PR00722">
    <property type="entry name" value="CHYMOTRYPSIN"/>
</dbReference>
<dbReference type="SMART" id="SM00020">
    <property type="entry name" value="Tryp_SPc"/>
    <property type="match status" value="1"/>
</dbReference>
<dbReference type="SUPFAM" id="SSF50494">
    <property type="entry name" value="Trypsin-like serine proteases"/>
    <property type="match status" value="1"/>
</dbReference>
<dbReference type="PROSITE" id="PS50240">
    <property type="entry name" value="TRYPSIN_DOM"/>
    <property type="match status" value="1"/>
</dbReference>
<dbReference type="PROSITE" id="PS00134">
    <property type="entry name" value="TRYPSIN_HIS"/>
    <property type="match status" value="1"/>
</dbReference>
<comment type="function">
    <text evidence="5">Thrombin-like snake venom serine protease that has coagulant activity by releasing fibrinopeptides A and B from fibrinogen alpha (FGA) and beta (FGB), with a preference for beta chain.</text>
</comment>
<comment type="activity regulation">
    <text evidence="5">Not inhibited by hirudin.</text>
</comment>
<comment type="subunit">
    <text evidence="1">Monomer.</text>
</comment>
<comment type="subcellular location">
    <subcellularLocation>
        <location evidence="4 5">Secreted</location>
    </subcellularLocation>
</comment>
<comment type="tissue specificity">
    <text evidence="7 8">Expressed by the venom gland.</text>
</comment>
<comment type="PTM">
    <text evidence="4">Glycosylated.</text>
</comment>
<comment type="similarity">
    <text evidence="2">Belongs to the peptidase S1 family. Snake venom subfamily.</text>
</comment>